<sequence>MHLHFTPRQIVEKLDQYIIGQKDAKKAVAVALRNRYRRSKLPEDLRDEIAPKNILMIGPTGVGKTEVARRMAKLVGAPFIKVEATKFTEVGYVGRDVESMVRDLVETSVRIVKEEMMVKVKDKAEEQANQRLVEILVPSPQKQTGFKNPLEMLFGGNQNVNQTSESQDDTEIQKKRQEVEKQLAAGLLEEEIVSIEVTEQQSSMFDMLQGTGMEQMGMNFQDALGSFMPKKTKKRKLSVKEARKVLTNEEAQRLIDMDEVTQEAVYRAEQLGIIFIDEIDKIAGKQSNSVDVSREGVQRDILPIVEGANVATKYGSVKTDYILFVAAGAFHMSKPSDLIPELQGRFPIRVELTKLSVDDFVKILIEPDNALVKQYAALLATEGIEIEFSDEAIRKIAEIAYQVNQDTDNIGARRLHTIMEKLLEDLSFEASEITLEKVTITPQYVEEKLATIAKNKDVSQFIL</sequence>
<comment type="function">
    <text evidence="1">ATPase subunit of a proteasome-like degradation complex; this subunit has chaperone activity. The binding of ATP and its subsequent hydrolysis by HslU are essential for unfolding of protein substrates subsequently hydrolyzed by HslV. HslU recognizes the N-terminal part of its protein substrates and unfolds these before they are guided to HslV for hydrolysis.</text>
</comment>
<comment type="subunit">
    <text evidence="1">A double ring-shaped homohexamer of HslV is capped on each side by a ring-shaped HslU homohexamer. The assembly of the HslU/HslV complex is dependent on binding of ATP.</text>
</comment>
<comment type="subcellular location">
    <subcellularLocation>
        <location evidence="1">Cytoplasm</location>
    </subcellularLocation>
</comment>
<comment type="similarity">
    <text evidence="1">Belongs to the ClpX chaperone family. HslU subfamily.</text>
</comment>
<keyword id="KW-0067">ATP-binding</keyword>
<keyword id="KW-0143">Chaperone</keyword>
<keyword id="KW-0963">Cytoplasm</keyword>
<keyword id="KW-0547">Nucleotide-binding</keyword>
<keyword id="KW-0346">Stress response</keyword>
<reference key="1">
    <citation type="journal article" date="2008" name="Chem. Biol. Interact.">
        <title>Extending the Bacillus cereus group genomics to putative food-borne pathogens of different toxicity.</title>
        <authorList>
            <person name="Lapidus A."/>
            <person name="Goltsman E."/>
            <person name="Auger S."/>
            <person name="Galleron N."/>
            <person name="Segurens B."/>
            <person name="Dossat C."/>
            <person name="Land M.L."/>
            <person name="Broussolle V."/>
            <person name="Brillard J."/>
            <person name="Guinebretiere M.-H."/>
            <person name="Sanchis V."/>
            <person name="Nguen-the C."/>
            <person name="Lereclus D."/>
            <person name="Richardson P."/>
            <person name="Wincker P."/>
            <person name="Weissenbach J."/>
            <person name="Ehrlich S.D."/>
            <person name="Sorokin A."/>
        </authorList>
    </citation>
    <scope>NUCLEOTIDE SEQUENCE [LARGE SCALE GENOMIC DNA]</scope>
    <source>
        <strain>DSM 22905 / CIP 110041 / 391-98 / NVH 391-98</strain>
    </source>
</reference>
<proteinExistence type="inferred from homology"/>
<name>HSLU_BACCN</name>
<accession>A7GRF9</accession>
<organism>
    <name type="scientific">Bacillus cytotoxicus (strain DSM 22905 / CIP 110041 / 391-98 / NVH 391-98)</name>
    <dbReference type="NCBI Taxonomy" id="315749"/>
    <lineage>
        <taxon>Bacteria</taxon>
        <taxon>Bacillati</taxon>
        <taxon>Bacillota</taxon>
        <taxon>Bacilli</taxon>
        <taxon>Bacillales</taxon>
        <taxon>Bacillaceae</taxon>
        <taxon>Bacillus</taxon>
        <taxon>Bacillus cereus group</taxon>
    </lineage>
</organism>
<feature type="chain" id="PRO_1000078438" description="ATP-dependent protease ATPase subunit HslU">
    <location>
        <begin position="1"/>
        <end position="463"/>
    </location>
</feature>
<feature type="binding site" evidence="1">
    <location>
        <position position="19"/>
    </location>
    <ligand>
        <name>ATP</name>
        <dbReference type="ChEBI" id="CHEBI:30616"/>
    </ligand>
</feature>
<feature type="binding site" evidence="1">
    <location>
        <begin position="61"/>
        <end position="66"/>
    </location>
    <ligand>
        <name>ATP</name>
        <dbReference type="ChEBI" id="CHEBI:30616"/>
    </ligand>
</feature>
<feature type="binding site" evidence="1">
    <location>
        <position position="277"/>
    </location>
    <ligand>
        <name>ATP</name>
        <dbReference type="ChEBI" id="CHEBI:30616"/>
    </ligand>
</feature>
<feature type="binding site" evidence="1">
    <location>
        <position position="341"/>
    </location>
    <ligand>
        <name>ATP</name>
        <dbReference type="ChEBI" id="CHEBI:30616"/>
    </ligand>
</feature>
<feature type="binding site" evidence="1">
    <location>
        <position position="413"/>
    </location>
    <ligand>
        <name>ATP</name>
        <dbReference type="ChEBI" id="CHEBI:30616"/>
    </ligand>
</feature>
<gene>
    <name evidence="1" type="primary">hslU</name>
    <name type="ordered locus">Bcer98_2481</name>
</gene>
<dbReference type="EMBL" id="CP000764">
    <property type="protein sequence ID" value="ABS22717.1"/>
    <property type="molecule type" value="Genomic_DNA"/>
</dbReference>
<dbReference type="RefSeq" id="WP_012094921.1">
    <property type="nucleotide sequence ID" value="NC_009674.1"/>
</dbReference>
<dbReference type="SMR" id="A7GRF9"/>
<dbReference type="STRING" id="315749.Bcer98_2481"/>
<dbReference type="GeneID" id="33897736"/>
<dbReference type="KEGG" id="bcy:Bcer98_2481"/>
<dbReference type="eggNOG" id="COG1220">
    <property type="taxonomic scope" value="Bacteria"/>
</dbReference>
<dbReference type="HOGENOM" id="CLU_033123_0_0_9"/>
<dbReference type="OrthoDB" id="9804062at2"/>
<dbReference type="Proteomes" id="UP000002300">
    <property type="component" value="Chromosome"/>
</dbReference>
<dbReference type="GO" id="GO:0009376">
    <property type="term" value="C:HslUV protease complex"/>
    <property type="evidence" value="ECO:0007669"/>
    <property type="project" value="UniProtKB-UniRule"/>
</dbReference>
<dbReference type="GO" id="GO:0005524">
    <property type="term" value="F:ATP binding"/>
    <property type="evidence" value="ECO:0007669"/>
    <property type="project" value="UniProtKB-UniRule"/>
</dbReference>
<dbReference type="GO" id="GO:0016887">
    <property type="term" value="F:ATP hydrolysis activity"/>
    <property type="evidence" value="ECO:0007669"/>
    <property type="project" value="InterPro"/>
</dbReference>
<dbReference type="GO" id="GO:0008233">
    <property type="term" value="F:peptidase activity"/>
    <property type="evidence" value="ECO:0007669"/>
    <property type="project" value="InterPro"/>
</dbReference>
<dbReference type="GO" id="GO:0036402">
    <property type="term" value="F:proteasome-activating activity"/>
    <property type="evidence" value="ECO:0007669"/>
    <property type="project" value="UniProtKB-UniRule"/>
</dbReference>
<dbReference type="GO" id="GO:0043335">
    <property type="term" value="P:protein unfolding"/>
    <property type="evidence" value="ECO:0007669"/>
    <property type="project" value="UniProtKB-UniRule"/>
</dbReference>
<dbReference type="GO" id="GO:0051603">
    <property type="term" value="P:proteolysis involved in protein catabolic process"/>
    <property type="evidence" value="ECO:0007669"/>
    <property type="project" value="TreeGrafter"/>
</dbReference>
<dbReference type="CDD" id="cd19498">
    <property type="entry name" value="RecA-like_HslU"/>
    <property type="match status" value="1"/>
</dbReference>
<dbReference type="FunFam" id="3.40.50.300:FF:000220">
    <property type="entry name" value="ATP-dependent protease ATPase subunit HslU"/>
    <property type="match status" value="1"/>
</dbReference>
<dbReference type="Gene3D" id="1.10.8.60">
    <property type="match status" value="1"/>
</dbReference>
<dbReference type="Gene3D" id="3.40.50.300">
    <property type="entry name" value="P-loop containing nucleotide triphosphate hydrolases"/>
    <property type="match status" value="2"/>
</dbReference>
<dbReference type="HAMAP" id="MF_00249">
    <property type="entry name" value="HslU"/>
    <property type="match status" value="1"/>
</dbReference>
<dbReference type="InterPro" id="IPR003593">
    <property type="entry name" value="AAA+_ATPase"/>
</dbReference>
<dbReference type="InterPro" id="IPR050052">
    <property type="entry name" value="ATP-dep_Clp_protease_ClpX"/>
</dbReference>
<dbReference type="InterPro" id="IPR003959">
    <property type="entry name" value="ATPase_AAA_core"/>
</dbReference>
<dbReference type="InterPro" id="IPR019489">
    <property type="entry name" value="Clp_ATPase_C"/>
</dbReference>
<dbReference type="InterPro" id="IPR004491">
    <property type="entry name" value="HslU"/>
</dbReference>
<dbReference type="InterPro" id="IPR027417">
    <property type="entry name" value="P-loop_NTPase"/>
</dbReference>
<dbReference type="NCBIfam" id="TIGR00390">
    <property type="entry name" value="hslU"/>
    <property type="match status" value="1"/>
</dbReference>
<dbReference type="NCBIfam" id="NF003544">
    <property type="entry name" value="PRK05201.1"/>
    <property type="match status" value="1"/>
</dbReference>
<dbReference type="PANTHER" id="PTHR48102">
    <property type="entry name" value="ATP-DEPENDENT CLP PROTEASE ATP-BINDING SUBUNIT CLPX-LIKE, MITOCHONDRIAL-RELATED"/>
    <property type="match status" value="1"/>
</dbReference>
<dbReference type="PANTHER" id="PTHR48102:SF3">
    <property type="entry name" value="ATP-DEPENDENT PROTEASE ATPASE SUBUNIT HSLU"/>
    <property type="match status" value="1"/>
</dbReference>
<dbReference type="Pfam" id="PF00004">
    <property type="entry name" value="AAA"/>
    <property type="match status" value="1"/>
</dbReference>
<dbReference type="Pfam" id="PF07724">
    <property type="entry name" value="AAA_2"/>
    <property type="match status" value="1"/>
</dbReference>
<dbReference type="Pfam" id="PF10431">
    <property type="entry name" value="ClpB_D2-small"/>
    <property type="match status" value="1"/>
</dbReference>
<dbReference type="SMART" id="SM00382">
    <property type="entry name" value="AAA"/>
    <property type="match status" value="1"/>
</dbReference>
<dbReference type="SMART" id="SM01086">
    <property type="entry name" value="ClpB_D2-small"/>
    <property type="match status" value="1"/>
</dbReference>
<dbReference type="SUPFAM" id="SSF52540">
    <property type="entry name" value="P-loop containing nucleoside triphosphate hydrolases"/>
    <property type="match status" value="1"/>
</dbReference>
<protein>
    <recommendedName>
        <fullName evidence="1">ATP-dependent protease ATPase subunit HslU</fullName>
    </recommendedName>
    <alternativeName>
        <fullName evidence="1">Unfoldase HslU</fullName>
    </alternativeName>
</protein>
<evidence type="ECO:0000255" key="1">
    <source>
        <dbReference type="HAMAP-Rule" id="MF_00249"/>
    </source>
</evidence>